<organism>
    <name type="scientific">Gallus gallus</name>
    <name type="common">Chicken</name>
    <dbReference type="NCBI Taxonomy" id="9031"/>
    <lineage>
        <taxon>Eukaryota</taxon>
        <taxon>Metazoa</taxon>
        <taxon>Chordata</taxon>
        <taxon>Craniata</taxon>
        <taxon>Vertebrata</taxon>
        <taxon>Euteleostomi</taxon>
        <taxon>Archelosauria</taxon>
        <taxon>Archosauria</taxon>
        <taxon>Dinosauria</taxon>
        <taxon>Saurischia</taxon>
        <taxon>Theropoda</taxon>
        <taxon>Coelurosauria</taxon>
        <taxon>Aves</taxon>
        <taxon>Neognathae</taxon>
        <taxon>Galloanserae</taxon>
        <taxon>Galliformes</taxon>
        <taxon>Phasianidae</taxon>
        <taxon>Phasianinae</taxon>
        <taxon>Gallus</taxon>
    </lineage>
</organism>
<accession>O42131</accession>
<name>TOP2B_CHICK</name>
<protein>
    <recommendedName>
        <fullName>DNA topoisomerase 2-beta</fullName>
        <ecNumber evidence="4">5.6.2.2</ecNumber>
    </recommendedName>
    <alternativeName>
        <fullName>DNA topoisomerase II, beta isozyme</fullName>
    </alternativeName>
</protein>
<proteinExistence type="evidence at transcript level"/>
<feature type="chain" id="PRO_0000145371" description="DNA topoisomerase 2-beta">
    <location>
        <begin position="1"/>
        <end position="1627"/>
    </location>
</feature>
<feature type="domain" description="Toprim" evidence="4">
    <location>
        <begin position="481"/>
        <end position="598"/>
    </location>
</feature>
<feature type="domain" description="Topo IIA-type catalytic" evidence="5">
    <location>
        <begin position="741"/>
        <end position="1194"/>
    </location>
</feature>
<feature type="region of interest" description="Interaction with DNA" evidence="1">
    <location>
        <begin position="368"/>
        <end position="370"/>
    </location>
</feature>
<feature type="region of interest" description="Interaction with DNA" evidence="1">
    <location>
        <begin position="1016"/>
        <end position="1025"/>
    </location>
</feature>
<feature type="region of interest" description="Disordered" evidence="6">
    <location>
        <begin position="1115"/>
        <end position="1144"/>
    </location>
</feature>
<feature type="region of interest" description="Disordered" evidence="6">
    <location>
        <begin position="1224"/>
        <end position="1248"/>
    </location>
</feature>
<feature type="region of interest" description="Disordered" evidence="6">
    <location>
        <begin position="1283"/>
        <end position="1365"/>
    </location>
</feature>
<feature type="region of interest" description="Disordered" evidence="6">
    <location>
        <begin position="1378"/>
        <end position="1627"/>
    </location>
</feature>
<feature type="compositionally biased region" description="Low complexity" evidence="6">
    <location>
        <begin position="1131"/>
        <end position="1144"/>
    </location>
</feature>
<feature type="compositionally biased region" description="Polar residues" evidence="6">
    <location>
        <begin position="1296"/>
        <end position="1305"/>
    </location>
</feature>
<feature type="compositionally biased region" description="Basic and acidic residues" evidence="6">
    <location>
        <begin position="1339"/>
        <end position="1349"/>
    </location>
</feature>
<feature type="compositionally biased region" description="Acidic residues" evidence="6">
    <location>
        <begin position="1381"/>
        <end position="1392"/>
    </location>
</feature>
<feature type="compositionally biased region" description="Acidic residues" evidence="6">
    <location>
        <begin position="1412"/>
        <end position="1428"/>
    </location>
</feature>
<feature type="compositionally biased region" description="Basic and acidic residues" evidence="6">
    <location>
        <begin position="1436"/>
        <end position="1448"/>
    </location>
</feature>
<feature type="compositionally biased region" description="Basic and acidic residues" evidence="6">
    <location>
        <begin position="1462"/>
        <end position="1471"/>
    </location>
</feature>
<feature type="compositionally biased region" description="Basic residues" evidence="6">
    <location>
        <begin position="1542"/>
        <end position="1552"/>
    </location>
</feature>
<feature type="compositionally biased region" description="Basic residues" evidence="6">
    <location>
        <begin position="1566"/>
        <end position="1578"/>
    </location>
</feature>
<feature type="compositionally biased region" description="Acidic residues" evidence="6">
    <location>
        <begin position="1616"/>
        <end position="1627"/>
    </location>
</feature>
<feature type="active site" description="O-(5'-phospho-DNA)-tyrosine intermediate" evidence="5">
    <location>
        <position position="831"/>
    </location>
</feature>
<feature type="binding site" evidence="1">
    <location>
        <position position="117"/>
    </location>
    <ligand>
        <name>ATP</name>
        <dbReference type="ChEBI" id="CHEBI:30616"/>
    </ligand>
</feature>
<feature type="binding site" evidence="1">
    <location>
        <position position="146"/>
    </location>
    <ligand>
        <name>ATP</name>
        <dbReference type="ChEBI" id="CHEBI:30616"/>
    </ligand>
</feature>
<feature type="binding site" evidence="1">
    <location>
        <begin position="174"/>
        <end position="176"/>
    </location>
    <ligand>
        <name>ATP</name>
        <dbReference type="ChEBI" id="CHEBI:30616"/>
    </ligand>
</feature>
<feature type="binding site" evidence="1">
    <location>
        <begin position="187"/>
        <end position="194"/>
    </location>
    <ligand>
        <name>ATP</name>
        <dbReference type="ChEBI" id="CHEBI:30616"/>
    </ligand>
</feature>
<feature type="binding site" evidence="1">
    <location>
        <begin position="402"/>
        <end position="404"/>
    </location>
    <ligand>
        <name>ATP</name>
        <dbReference type="ChEBI" id="CHEBI:30616"/>
    </ligand>
</feature>
<feature type="binding site" evidence="4">
    <location>
        <position position="487"/>
    </location>
    <ligand>
        <name>Mg(2+)</name>
        <dbReference type="ChEBI" id="CHEBI:18420"/>
        <label>1</label>
        <note>catalytic</note>
    </ligand>
</feature>
<feature type="binding site" evidence="4">
    <location>
        <position position="567"/>
    </location>
    <ligand>
        <name>Mg(2+)</name>
        <dbReference type="ChEBI" id="CHEBI:18420"/>
        <label>1</label>
        <note>catalytic</note>
    </ligand>
</feature>
<feature type="binding site" evidence="4">
    <location>
        <position position="567"/>
    </location>
    <ligand>
        <name>Mg(2+)</name>
        <dbReference type="ChEBI" id="CHEBI:18420"/>
        <label>2</label>
    </ligand>
</feature>
<feature type="binding site" evidence="4">
    <location>
        <position position="569"/>
    </location>
    <ligand>
        <name>Mg(2+)</name>
        <dbReference type="ChEBI" id="CHEBI:18420"/>
        <label>2</label>
    </ligand>
</feature>
<feature type="site" description="Interaction with DNA" evidence="4">
    <location>
        <position position="515"/>
    </location>
</feature>
<feature type="site" description="Interaction with DNA" evidence="4">
    <location>
        <position position="518"/>
    </location>
</feature>
<feature type="site" description="Interaction with DNA" evidence="4">
    <location>
        <position position="687"/>
    </location>
</feature>
<feature type="site" description="Interaction with DNA" evidence="4">
    <location>
        <position position="688"/>
    </location>
</feature>
<feature type="site" description="Interaction with DNA" evidence="4">
    <location>
        <position position="749"/>
    </location>
</feature>
<feature type="site" description="Interaction with DNA" evidence="4">
    <location>
        <position position="783"/>
    </location>
</feature>
<feature type="site" description="Transition state stabilizer" evidence="1">
    <location>
        <position position="830"/>
    </location>
</feature>
<feature type="site" description="Important for DNA bending; intercalates between base pairs of target DNA" evidence="1">
    <location>
        <position position="882"/>
    </location>
</feature>
<feature type="site" description="Interaction with DNA" evidence="4">
    <location>
        <position position="957"/>
    </location>
</feature>
<reference key="1">
    <citation type="journal article" date="2001" name="Chromosoma">
        <title>Co-localization of chicken DNA topoisomerase IIalpha, but not beta, with sites of DNA replication and possible involvement of a C-terminal region of alpha through its binding to PCNA.</title>
        <authorList>
            <person name="Niimi A."/>
            <person name="Suka N."/>
            <person name="Harata M."/>
            <person name="Kikuchi A."/>
            <person name="Mizuno S."/>
        </authorList>
    </citation>
    <scope>NUCLEOTIDE SEQUENCE [MRNA]</scope>
    <scope>SUBCELLULAR LOCATION</scope>
</reference>
<comment type="function">
    <text evidence="3">Key decatenating enzyme that alters DNA topology by binding to two double-stranded DNA molecules, generating a double-stranded break in one of the strands, passing the intact strand through the broken strand, and religating the broken strand. Plays a role in B-cell differentiation.</text>
</comment>
<comment type="catalytic activity">
    <reaction evidence="4">
        <text>ATP-dependent breakage, passage and rejoining of double-stranded DNA.</text>
        <dbReference type="EC" id="5.6.2.2"/>
    </reaction>
</comment>
<comment type="cofactor">
    <cofactor evidence="4">
        <name>Mg(2+)</name>
        <dbReference type="ChEBI" id="CHEBI:18420"/>
    </cofactor>
    <cofactor evidence="4">
        <name>Mn(2+)</name>
        <dbReference type="ChEBI" id="CHEBI:29035"/>
    </cofactor>
    <cofactor evidence="4">
        <name>Ca(2+)</name>
        <dbReference type="ChEBI" id="CHEBI:29108"/>
    </cofactor>
    <text evidence="4">Binds two Mg(2+) per subunit. The magnesium ions form salt bridges with both the protein and the DNA. Can also accept other divalent metal cations, such as Mn(2+) or Ca(2+).</text>
</comment>
<comment type="subunit">
    <text evidence="2">Homodimer.</text>
</comment>
<comment type="subcellular location">
    <subcellularLocation>
        <location evidence="2">Nucleus</location>
        <location evidence="2">Nucleolus</location>
    </subcellularLocation>
    <subcellularLocation>
        <location evidence="2">Nucleus</location>
        <location evidence="2">Nucleoplasm</location>
    </subcellularLocation>
    <subcellularLocation>
        <location evidence="7">Nucleus</location>
    </subcellularLocation>
</comment>
<comment type="miscellaneous">
    <text>Eukaryotic topoisomerase I and II can relax both negative and positive supercoils, whereas prokaryotic enzymes relax only negative supercoils.</text>
</comment>
<comment type="similarity">
    <text evidence="8">Belongs to the type II topoisomerase family.</text>
</comment>
<sequence>MAKSGGGGGGGGGGGGGGGGSGGLTCVTLFDNQINASKKEESESVNKNDTSKKMSVERVYQKKTQLEHILLRPDTYIGSVEPLTQLMWVYDEDVGMNCREVTFVPGLYKIFDEILVNAADNKQRDKNMTCIKISIDPESNIISIWNNGKGIPVVEHKVEKVYVPALIFGQLLTSSNYDDDEKKVTGGRNGYGAKLCNIFSTKFTVETACKEYKHSFKQTWMNNMMKTSEPKIKHFEGDDYTCITFQPDLSKFKMENLDKDIVSLMTRRAYDLAGSCKGVKVMLNGKKLPVNGFRSYVDLYVKDKLDETGVALKVIHEVVNERWDVCLTLSEKGFQQISFVNSIATTKGGRHVDYVVDQVVGKLIEVVKKKNKAGVSVKPFQVKNHIWVFVNCLIENPSFDSQTKENMTLQPKSFGSKCQLSEKFFKAASNCGIIESILNWVKFKAQTQLNKKCSSVKHSKIKGIPKLDDANDAGGKHSLDCTLILTEGDSAKSLAVSGLGVIGRDRYGVFPLRGKILNVREASHKQIMENAEINNIIKIVGLQYKKSYEDPESLKSLRYGKIMIMTDQDQDGSHIKGLLINFIHHNWPSLLKHGFLEEFITPIVKASKNKQELSFYSIPEFDEWKKHMENHKAWKIKYYKGLGTSTAKEAKEYFADMERHRILFRYAGPEDDAAITLAFSKKKIDDRKEWLTNFMEDRRQRRLHGLPEQFLYGTATKHLTYNDFINKELILFSNSDNERSIPSLVDGLKPGQRKVLFTCFKRNDKREVKVAQLAGSVAEMSAYHHGEQALMMTIVNLAQNFVGSNNVNLLQPIGQFGTRLHGGKDAASPRYIFTMLSPLARLLFPSVDDNLLKFLYDDNQRVEPEWYIPIIPMVLVNGAEGIGTGWACKLPNYDTREIVNNVRRMLDGLDPHPMLPNYKNFRGTIQELGQNQYVVSGEIFVVDRNTVEITELPVRTWTQVYKEQVLEPMLNGTEKTPALISDYKEYHTDTTVKFVVKMTEEKLAQAEAAGLHKVFKLQTSLTCNSMVLFDHMGCLKKYETVQDILKEFFDLRLHYYSLRKEWLVGMLGAESTKLNNQARFILEKIQGKITIENRSKRDLIQMLVQRGYESDPVKAWKEAQEKAAEEEDPQNANDDASSASGSTSGPDFNYILNMSLWSLTKEKVEELIKHRDSKERELNDLKRKSASDLWKEDLAAFVEELEKVEAQEREDVLAGMVGKPIKGKVGKPKMKKLQLEETMPSPFGRRIVPQITSAMKADASRKLLKKKKGDADSVAIKMEFDEEFGGVQAEGGGDDTVNTAASGTKTPKLKREKKEPGTRVRRAPSSTKSSAKKVKKRNPWSDDESKSESDLEESEPVIIPRDSLLRRAAADRAKYTFDFSKEEDDAHDDDDANNNNDLDELKVKASPVINDREDEFVPSDSVEKDEYDFSPVKSKPSPEKMSQEKKNQDFGNIFSFPSYSQKTDDDTTKLDSDEEDSTPVFSSPFAPKQTEKMLSKTVAAKKAKVDVPPKPKRAPKAKKMETVNSDSDSEFGIPKKTAAPKGKGRGAKKRKTSGSENEGEYNPGKKAPKSTPCKKSKKAAFDQDSDVEIFQSGFASETAPKPRTGRARKEVKYFAESDEDDDFDMFN</sequence>
<gene>
    <name type="primary">TOP2B</name>
</gene>
<keyword id="KW-0067">ATP-binding</keyword>
<keyword id="KW-0238">DNA-binding</keyword>
<keyword id="KW-0413">Isomerase</keyword>
<keyword id="KW-0460">Magnesium</keyword>
<keyword id="KW-0479">Metal-binding</keyword>
<keyword id="KW-0547">Nucleotide-binding</keyword>
<keyword id="KW-0539">Nucleus</keyword>
<keyword id="KW-1185">Reference proteome</keyword>
<keyword id="KW-0799">Topoisomerase</keyword>
<dbReference type="EC" id="5.6.2.2" evidence="4"/>
<dbReference type="EMBL" id="AB007446">
    <property type="protein sequence ID" value="BAA22540.1"/>
    <property type="molecule type" value="mRNA"/>
</dbReference>
<dbReference type="RefSeq" id="NP_990413.1">
    <property type="nucleotide sequence ID" value="NM_205082.1"/>
</dbReference>
<dbReference type="SMR" id="O42131"/>
<dbReference type="FunCoup" id="O42131">
    <property type="interactions" value="2598"/>
</dbReference>
<dbReference type="STRING" id="9031.ENSGALP00000068247"/>
<dbReference type="PaxDb" id="9031-ENSGALP00000018410"/>
<dbReference type="KEGG" id="gga:395966"/>
<dbReference type="VEuPathDB" id="HostDB:geneid_395966"/>
<dbReference type="eggNOG" id="KOG0355">
    <property type="taxonomic scope" value="Eukaryota"/>
</dbReference>
<dbReference type="InParanoid" id="O42131"/>
<dbReference type="OrthoDB" id="276498at2759"/>
<dbReference type="PhylomeDB" id="O42131"/>
<dbReference type="PRO" id="PR:O42131"/>
<dbReference type="Proteomes" id="UP000000539">
    <property type="component" value="Unassembled WGS sequence"/>
</dbReference>
<dbReference type="GO" id="GO:0005730">
    <property type="term" value="C:nucleolus"/>
    <property type="evidence" value="ECO:0000250"/>
    <property type="project" value="UniProtKB"/>
</dbReference>
<dbReference type="GO" id="GO:0005654">
    <property type="term" value="C:nucleoplasm"/>
    <property type="evidence" value="ECO:0007669"/>
    <property type="project" value="UniProtKB-SubCell"/>
</dbReference>
<dbReference type="GO" id="GO:0005634">
    <property type="term" value="C:nucleus"/>
    <property type="evidence" value="ECO:0000314"/>
    <property type="project" value="AgBase"/>
</dbReference>
<dbReference type="GO" id="GO:1990904">
    <property type="term" value="C:ribonucleoprotein complex"/>
    <property type="evidence" value="ECO:0000250"/>
    <property type="project" value="UniProtKB"/>
</dbReference>
<dbReference type="GO" id="GO:0005524">
    <property type="term" value="F:ATP binding"/>
    <property type="evidence" value="ECO:0007669"/>
    <property type="project" value="UniProtKB-KW"/>
</dbReference>
<dbReference type="GO" id="GO:0003677">
    <property type="term" value="F:DNA binding"/>
    <property type="evidence" value="ECO:0007669"/>
    <property type="project" value="UniProtKB-KW"/>
</dbReference>
<dbReference type="GO" id="GO:0003916">
    <property type="term" value="F:DNA topoisomerase activity"/>
    <property type="evidence" value="ECO:0000250"/>
    <property type="project" value="UniProtKB"/>
</dbReference>
<dbReference type="GO" id="GO:0003918">
    <property type="term" value="F:DNA topoisomerase type II (double strand cut, ATP-hydrolyzing) activity"/>
    <property type="evidence" value="ECO:0000250"/>
    <property type="project" value="UniProtKB"/>
</dbReference>
<dbReference type="GO" id="GO:0046872">
    <property type="term" value="F:metal ion binding"/>
    <property type="evidence" value="ECO:0007669"/>
    <property type="project" value="UniProtKB-KW"/>
</dbReference>
<dbReference type="GO" id="GO:0030183">
    <property type="term" value="P:B cell differentiation"/>
    <property type="evidence" value="ECO:0000250"/>
    <property type="project" value="UniProtKB"/>
</dbReference>
<dbReference type="GO" id="GO:0006265">
    <property type="term" value="P:DNA topological change"/>
    <property type="evidence" value="ECO:0000250"/>
    <property type="project" value="UniProtKB"/>
</dbReference>
<dbReference type="GO" id="GO:0000712">
    <property type="term" value="P:resolution of meiotic recombination intermediates"/>
    <property type="evidence" value="ECO:0000318"/>
    <property type="project" value="GO_Central"/>
</dbReference>
<dbReference type="GO" id="GO:0000819">
    <property type="term" value="P:sister chromatid segregation"/>
    <property type="evidence" value="ECO:0000318"/>
    <property type="project" value="GO_Central"/>
</dbReference>
<dbReference type="CDD" id="cd16930">
    <property type="entry name" value="HATPase_TopII-like"/>
    <property type="match status" value="1"/>
</dbReference>
<dbReference type="CDD" id="cd00187">
    <property type="entry name" value="TOP4c"/>
    <property type="match status" value="1"/>
</dbReference>
<dbReference type="CDD" id="cd03481">
    <property type="entry name" value="TopoIIA_Trans_ScTopoIIA"/>
    <property type="match status" value="1"/>
</dbReference>
<dbReference type="CDD" id="cd03365">
    <property type="entry name" value="TOPRIM_TopoIIA"/>
    <property type="match status" value="1"/>
</dbReference>
<dbReference type="FunFam" id="1.10.268.10:FF:000002">
    <property type="entry name" value="DNA topoisomerase 2"/>
    <property type="match status" value="1"/>
</dbReference>
<dbReference type="FunFam" id="3.30.1360.40:FF:000003">
    <property type="entry name" value="DNA topoisomerase 2"/>
    <property type="match status" value="1"/>
</dbReference>
<dbReference type="FunFam" id="3.30.1490.30:FF:000001">
    <property type="entry name" value="DNA topoisomerase 2"/>
    <property type="match status" value="1"/>
</dbReference>
<dbReference type="FunFam" id="3.30.230.10:FF:000008">
    <property type="entry name" value="DNA topoisomerase 2"/>
    <property type="match status" value="1"/>
</dbReference>
<dbReference type="FunFam" id="3.30.565.10:FF:000004">
    <property type="entry name" value="DNA topoisomerase 2"/>
    <property type="match status" value="1"/>
</dbReference>
<dbReference type="FunFam" id="3.40.50.670:FF:000001">
    <property type="entry name" value="DNA topoisomerase 2"/>
    <property type="match status" value="2"/>
</dbReference>
<dbReference type="FunFam" id="3.90.199.10:FF:000002">
    <property type="entry name" value="DNA topoisomerase 2"/>
    <property type="match status" value="1"/>
</dbReference>
<dbReference type="Gene3D" id="3.30.1360.40">
    <property type="match status" value="1"/>
</dbReference>
<dbReference type="Gene3D" id="3.30.1490.30">
    <property type="match status" value="1"/>
</dbReference>
<dbReference type="Gene3D" id="3.30.230.10">
    <property type="match status" value="1"/>
</dbReference>
<dbReference type="Gene3D" id="3.40.50.670">
    <property type="match status" value="1"/>
</dbReference>
<dbReference type="Gene3D" id="3.30.565.10">
    <property type="entry name" value="Histidine kinase-like ATPase, C-terminal domain"/>
    <property type="match status" value="1"/>
</dbReference>
<dbReference type="Gene3D" id="3.90.199.10">
    <property type="entry name" value="Topoisomerase II, domain 5"/>
    <property type="match status" value="1"/>
</dbReference>
<dbReference type="Gene3D" id="1.10.268.10">
    <property type="entry name" value="Topoisomerase, domain 3"/>
    <property type="match status" value="1"/>
</dbReference>
<dbReference type="InterPro" id="IPR050634">
    <property type="entry name" value="DNA_Topoisomerase_II"/>
</dbReference>
<dbReference type="InterPro" id="IPR012542">
    <property type="entry name" value="DTHCT"/>
</dbReference>
<dbReference type="InterPro" id="IPR036890">
    <property type="entry name" value="HATPase_C_sf"/>
</dbReference>
<dbReference type="InterPro" id="IPR020568">
    <property type="entry name" value="Ribosomal_Su5_D2-typ_SF"/>
</dbReference>
<dbReference type="InterPro" id="IPR014721">
    <property type="entry name" value="Ribsml_uS5_D2-typ_fold_subgr"/>
</dbReference>
<dbReference type="InterPro" id="IPR001241">
    <property type="entry name" value="Topo_IIA"/>
</dbReference>
<dbReference type="InterPro" id="IPR013760">
    <property type="entry name" value="Topo_IIA-like_dom_sf"/>
</dbReference>
<dbReference type="InterPro" id="IPR013758">
    <property type="entry name" value="Topo_IIA_A/C_ab"/>
</dbReference>
<dbReference type="InterPro" id="IPR013757">
    <property type="entry name" value="Topo_IIA_A_a_sf"/>
</dbReference>
<dbReference type="InterPro" id="IPR013759">
    <property type="entry name" value="Topo_IIA_B_C"/>
</dbReference>
<dbReference type="InterPro" id="IPR013506">
    <property type="entry name" value="Topo_IIA_bsu_dom2"/>
</dbReference>
<dbReference type="InterPro" id="IPR002205">
    <property type="entry name" value="Topo_IIA_dom_A"/>
</dbReference>
<dbReference type="InterPro" id="IPR001154">
    <property type="entry name" value="TopoII_euk"/>
</dbReference>
<dbReference type="InterPro" id="IPR018522">
    <property type="entry name" value="TopoIIA_CS"/>
</dbReference>
<dbReference type="InterPro" id="IPR031660">
    <property type="entry name" value="TOPRIM_C"/>
</dbReference>
<dbReference type="InterPro" id="IPR006171">
    <property type="entry name" value="TOPRIM_dom"/>
</dbReference>
<dbReference type="InterPro" id="IPR034157">
    <property type="entry name" value="TOPRIM_TopoII"/>
</dbReference>
<dbReference type="PANTHER" id="PTHR10169:SF36">
    <property type="entry name" value="DNA TOPOISOMERASE 2-BETA"/>
    <property type="match status" value="1"/>
</dbReference>
<dbReference type="PANTHER" id="PTHR10169">
    <property type="entry name" value="DNA TOPOISOMERASE/GYRASE"/>
    <property type="match status" value="1"/>
</dbReference>
<dbReference type="Pfam" id="PF00204">
    <property type="entry name" value="DNA_gyraseB"/>
    <property type="match status" value="1"/>
</dbReference>
<dbReference type="Pfam" id="PF00521">
    <property type="entry name" value="DNA_topoisoIV"/>
    <property type="match status" value="1"/>
</dbReference>
<dbReference type="Pfam" id="PF08070">
    <property type="entry name" value="DTHCT"/>
    <property type="match status" value="1"/>
</dbReference>
<dbReference type="Pfam" id="PF02518">
    <property type="entry name" value="HATPase_c"/>
    <property type="match status" value="1"/>
</dbReference>
<dbReference type="Pfam" id="PF01751">
    <property type="entry name" value="Toprim"/>
    <property type="match status" value="1"/>
</dbReference>
<dbReference type="Pfam" id="PF16898">
    <property type="entry name" value="TOPRIM_C"/>
    <property type="match status" value="1"/>
</dbReference>
<dbReference type="PRINTS" id="PR01158">
    <property type="entry name" value="TOPISMRASEII"/>
</dbReference>
<dbReference type="PRINTS" id="PR00418">
    <property type="entry name" value="TPI2FAMILY"/>
</dbReference>
<dbReference type="SMART" id="SM00433">
    <property type="entry name" value="TOP2c"/>
    <property type="match status" value="1"/>
</dbReference>
<dbReference type="SMART" id="SM00434">
    <property type="entry name" value="TOP4c"/>
    <property type="match status" value="1"/>
</dbReference>
<dbReference type="SUPFAM" id="SSF55874">
    <property type="entry name" value="ATPase domain of HSP90 chaperone/DNA topoisomerase II/histidine kinase"/>
    <property type="match status" value="1"/>
</dbReference>
<dbReference type="SUPFAM" id="SSF54211">
    <property type="entry name" value="Ribosomal protein S5 domain 2-like"/>
    <property type="match status" value="1"/>
</dbReference>
<dbReference type="SUPFAM" id="SSF56719">
    <property type="entry name" value="Type II DNA topoisomerase"/>
    <property type="match status" value="1"/>
</dbReference>
<dbReference type="PROSITE" id="PS52040">
    <property type="entry name" value="TOPO_IIA"/>
    <property type="match status" value="1"/>
</dbReference>
<dbReference type="PROSITE" id="PS00177">
    <property type="entry name" value="TOPOISOMERASE_II"/>
    <property type="match status" value="1"/>
</dbReference>
<dbReference type="PROSITE" id="PS50880">
    <property type="entry name" value="TOPRIM"/>
    <property type="match status" value="1"/>
</dbReference>
<evidence type="ECO:0000250" key="1"/>
<evidence type="ECO:0000250" key="2">
    <source>
        <dbReference type="UniProtKB" id="Q02880"/>
    </source>
</evidence>
<evidence type="ECO:0000250" key="3">
    <source>
        <dbReference type="UniProtKB" id="Q64511"/>
    </source>
</evidence>
<evidence type="ECO:0000255" key="4">
    <source>
        <dbReference type="PROSITE-ProRule" id="PRU00995"/>
    </source>
</evidence>
<evidence type="ECO:0000255" key="5">
    <source>
        <dbReference type="PROSITE-ProRule" id="PRU01384"/>
    </source>
</evidence>
<evidence type="ECO:0000256" key="6">
    <source>
        <dbReference type="SAM" id="MobiDB-lite"/>
    </source>
</evidence>
<evidence type="ECO:0000269" key="7">
    <source>
    </source>
</evidence>
<evidence type="ECO:0000305" key="8"/>